<name>LPXC_RICB8</name>
<proteinExistence type="inferred from homology"/>
<feature type="chain" id="PRO_1000013223" description="UDP-3-O-acyl-N-acetylglucosamine deacetylase">
    <location>
        <begin position="1"/>
        <end position="288"/>
    </location>
</feature>
<feature type="active site" description="Proton donor" evidence="1">
    <location>
        <position position="263"/>
    </location>
</feature>
<feature type="binding site" evidence="1">
    <location>
        <position position="79"/>
    </location>
    <ligand>
        <name>Zn(2+)</name>
        <dbReference type="ChEBI" id="CHEBI:29105"/>
    </ligand>
</feature>
<feature type="binding site" evidence="1">
    <location>
        <position position="236"/>
    </location>
    <ligand>
        <name>Zn(2+)</name>
        <dbReference type="ChEBI" id="CHEBI:29105"/>
    </ligand>
</feature>
<feature type="binding site" evidence="1">
    <location>
        <position position="240"/>
    </location>
    <ligand>
        <name>Zn(2+)</name>
        <dbReference type="ChEBI" id="CHEBI:29105"/>
    </ligand>
</feature>
<reference key="1">
    <citation type="submission" date="2007-09" db="EMBL/GenBank/DDBJ databases">
        <title>Complete genome sequencing of Rickettsia bellii.</title>
        <authorList>
            <person name="Madan A."/>
            <person name="Lee H."/>
            <person name="Madan A."/>
            <person name="Yoon J.-G."/>
            <person name="Ryu G.-Y."/>
            <person name="Dasch G."/>
            <person name="Ereemeva M."/>
        </authorList>
    </citation>
    <scope>NUCLEOTIDE SEQUENCE [LARGE SCALE GENOMIC DNA]</scope>
    <source>
        <strain>OSU 85-389</strain>
    </source>
</reference>
<organism>
    <name type="scientific">Rickettsia bellii (strain OSU 85-389)</name>
    <dbReference type="NCBI Taxonomy" id="391896"/>
    <lineage>
        <taxon>Bacteria</taxon>
        <taxon>Pseudomonadati</taxon>
        <taxon>Pseudomonadota</taxon>
        <taxon>Alphaproteobacteria</taxon>
        <taxon>Rickettsiales</taxon>
        <taxon>Rickettsiaceae</taxon>
        <taxon>Rickettsieae</taxon>
        <taxon>Rickettsia</taxon>
        <taxon>belli group</taxon>
    </lineage>
</organism>
<dbReference type="EC" id="3.5.1.108" evidence="1"/>
<dbReference type="EMBL" id="CP000849">
    <property type="protein sequence ID" value="ABV79131.1"/>
    <property type="molecule type" value="Genomic_DNA"/>
</dbReference>
<dbReference type="RefSeq" id="WP_011477616.1">
    <property type="nucleotide sequence ID" value="NC_009883.1"/>
</dbReference>
<dbReference type="SMR" id="A8GWA4"/>
<dbReference type="KEGG" id="rbo:A1I_03890"/>
<dbReference type="HOGENOM" id="CLU_046528_1_1_5"/>
<dbReference type="UniPathway" id="UPA00359">
    <property type="reaction ID" value="UER00478"/>
</dbReference>
<dbReference type="GO" id="GO:0016020">
    <property type="term" value="C:membrane"/>
    <property type="evidence" value="ECO:0007669"/>
    <property type="project" value="GOC"/>
</dbReference>
<dbReference type="GO" id="GO:0046872">
    <property type="term" value="F:metal ion binding"/>
    <property type="evidence" value="ECO:0007669"/>
    <property type="project" value="UniProtKB-KW"/>
</dbReference>
<dbReference type="GO" id="GO:0103117">
    <property type="term" value="F:UDP-3-O-acyl-N-acetylglucosamine deacetylase activity"/>
    <property type="evidence" value="ECO:0007669"/>
    <property type="project" value="UniProtKB-UniRule"/>
</dbReference>
<dbReference type="GO" id="GO:0009245">
    <property type="term" value="P:lipid A biosynthetic process"/>
    <property type="evidence" value="ECO:0007669"/>
    <property type="project" value="UniProtKB-UniRule"/>
</dbReference>
<dbReference type="Gene3D" id="3.30.230.20">
    <property type="entry name" value="lpxc deacetylase, domain 1"/>
    <property type="match status" value="1"/>
</dbReference>
<dbReference type="Gene3D" id="3.30.1700.10">
    <property type="entry name" value="lpxc deacetylase, domain 2"/>
    <property type="match status" value="1"/>
</dbReference>
<dbReference type="HAMAP" id="MF_00388">
    <property type="entry name" value="LpxC"/>
    <property type="match status" value="1"/>
</dbReference>
<dbReference type="InterPro" id="IPR020568">
    <property type="entry name" value="Ribosomal_Su5_D2-typ_SF"/>
</dbReference>
<dbReference type="InterPro" id="IPR004463">
    <property type="entry name" value="UDP-acyl_GlcNac_deAcase"/>
</dbReference>
<dbReference type="InterPro" id="IPR011334">
    <property type="entry name" value="UDP-acyl_GlcNac_deAcase_C"/>
</dbReference>
<dbReference type="InterPro" id="IPR015870">
    <property type="entry name" value="UDP-acyl_N-AcGlcN_deAcase_N"/>
</dbReference>
<dbReference type="NCBIfam" id="TIGR00325">
    <property type="entry name" value="lpxC"/>
    <property type="match status" value="1"/>
</dbReference>
<dbReference type="PANTHER" id="PTHR33694">
    <property type="entry name" value="UDP-3-O-ACYL-N-ACETYLGLUCOSAMINE DEACETYLASE 1, MITOCHONDRIAL-RELATED"/>
    <property type="match status" value="1"/>
</dbReference>
<dbReference type="PANTHER" id="PTHR33694:SF1">
    <property type="entry name" value="UDP-3-O-ACYL-N-ACETYLGLUCOSAMINE DEACETYLASE 1, MITOCHONDRIAL-RELATED"/>
    <property type="match status" value="1"/>
</dbReference>
<dbReference type="Pfam" id="PF03331">
    <property type="entry name" value="LpxC"/>
    <property type="match status" value="1"/>
</dbReference>
<dbReference type="SUPFAM" id="SSF54211">
    <property type="entry name" value="Ribosomal protein S5 domain 2-like"/>
    <property type="match status" value="2"/>
</dbReference>
<gene>
    <name evidence="1" type="primary">lpxC</name>
    <name type="ordered locus">A1I_03890</name>
</gene>
<comment type="function">
    <text evidence="1">Catalyzes the hydrolysis of UDP-3-O-myristoyl-N-acetylglucosamine to form UDP-3-O-myristoylglucosamine and acetate, the committed step in lipid A biosynthesis.</text>
</comment>
<comment type="catalytic activity">
    <reaction evidence="1">
        <text>a UDP-3-O-[(3R)-3-hydroxyacyl]-N-acetyl-alpha-D-glucosamine + H2O = a UDP-3-O-[(3R)-3-hydroxyacyl]-alpha-D-glucosamine + acetate</text>
        <dbReference type="Rhea" id="RHEA:67816"/>
        <dbReference type="ChEBI" id="CHEBI:15377"/>
        <dbReference type="ChEBI" id="CHEBI:30089"/>
        <dbReference type="ChEBI" id="CHEBI:137740"/>
        <dbReference type="ChEBI" id="CHEBI:173225"/>
        <dbReference type="EC" id="3.5.1.108"/>
    </reaction>
</comment>
<comment type="cofactor">
    <cofactor evidence="1">
        <name>Zn(2+)</name>
        <dbReference type="ChEBI" id="CHEBI:29105"/>
    </cofactor>
</comment>
<comment type="pathway">
    <text evidence="1">Glycolipid biosynthesis; lipid IV(A) biosynthesis; lipid IV(A) from (3R)-3-hydroxytetradecanoyl-[acyl-carrier-protein] and UDP-N-acetyl-alpha-D-glucosamine: step 2/6.</text>
</comment>
<comment type="similarity">
    <text evidence="1">Belongs to the LpxC family.</text>
</comment>
<accession>A8GWA4</accession>
<sequence length="288" mass="31987">MQQITLSKPVSCYGIGVHSGKRTQLTIEPAKENTGIIFIRTDISSENNYIEAKYFNVSDTLLSTTISNSNKIQVSTIEHIMAALWGCGIDNAVIKIDGPEVPIMDGSSKPFVFMIECAGKKLQNAPKKYLKILKEVTATHKDCELTCTPSDHMKIDLTIDFNSKAIGRQNLVFSKQESFNNNIADARTFGFTKDGDYLQSKGLALGVSFENTIAIDDQDKVLNPDGLRYQDEFVRHKLLDLFGDLYTSGNNIVSSINGYKTSHALNNELLQRIFSDNTSHKFVTASEI</sequence>
<evidence type="ECO:0000255" key="1">
    <source>
        <dbReference type="HAMAP-Rule" id="MF_00388"/>
    </source>
</evidence>
<protein>
    <recommendedName>
        <fullName evidence="1">UDP-3-O-acyl-N-acetylglucosamine deacetylase</fullName>
        <shortName evidence="1">UDP-3-O-acyl-GlcNAc deacetylase</shortName>
        <ecNumber evidence="1">3.5.1.108</ecNumber>
    </recommendedName>
    <alternativeName>
        <fullName evidence="1">UDP-3-O-[R-3-hydroxymyristoyl]-N-acetylglucosamine deacetylase</fullName>
    </alternativeName>
</protein>
<keyword id="KW-0378">Hydrolase</keyword>
<keyword id="KW-0441">Lipid A biosynthesis</keyword>
<keyword id="KW-0444">Lipid biosynthesis</keyword>
<keyword id="KW-0443">Lipid metabolism</keyword>
<keyword id="KW-0479">Metal-binding</keyword>
<keyword id="KW-0862">Zinc</keyword>